<keyword id="KW-0378">Hydrolase</keyword>
<keyword id="KW-0645">Protease</keyword>
<keyword id="KW-0964">Secreted</keyword>
<keyword id="KW-0720">Serine protease</keyword>
<keyword id="KW-0732">Signal</keyword>
<accession>Q2FFT4</accession>
<dbReference type="EC" id="3.4.21.-"/>
<dbReference type="EMBL" id="CP000255">
    <property type="protein sequence ID" value="ABD21806.1"/>
    <property type="molecule type" value="Genomic_DNA"/>
</dbReference>
<dbReference type="SMR" id="Q2FFT4"/>
<dbReference type="MEROPS" id="S01.526"/>
<dbReference type="KEGG" id="saa:SAUSA300_1753"/>
<dbReference type="HOGENOM" id="CLU_073589_2_0_9"/>
<dbReference type="Proteomes" id="UP000001939">
    <property type="component" value="Chromosome"/>
</dbReference>
<dbReference type="GO" id="GO:0005576">
    <property type="term" value="C:extracellular region"/>
    <property type="evidence" value="ECO:0007669"/>
    <property type="project" value="UniProtKB-SubCell"/>
</dbReference>
<dbReference type="GO" id="GO:0008236">
    <property type="term" value="F:serine-type peptidase activity"/>
    <property type="evidence" value="ECO:0007669"/>
    <property type="project" value="UniProtKB-KW"/>
</dbReference>
<dbReference type="GO" id="GO:0006508">
    <property type="term" value="P:proteolysis"/>
    <property type="evidence" value="ECO:0007669"/>
    <property type="project" value="UniProtKB-KW"/>
</dbReference>
<dbReference type="Gene3D" id="2.40.10.10">
    <property type="entry name" value="Trypsin-like serine proteases"/>
    <property type="match status" value="2"/>
</dbReference>
<dbReference type="InterPro" id="IPR009003">
    <property type="entry name" value="Peptidase_S1_PA"/>
</dbReference>
<dbReference type="InterPro" id="IPR043504">
    <property type="entry name" value="Peptidase_S1_PA_chymotrypsin"/>
</dbReference>
<dbReference type="InterPro" id="IPR008256">
    <property type="entry name" value="Peptidase_S1B"/>
</dbReference>
<dbReference type="InterPro" id="IPR028301">
    <property type="entry name" value="V8_his_AS"/>
</dbReference>
<dbReference type="PANTHER" id="PTHR43019:SF23">
    <property type="entry name" value="PROTEASE DO-LIKE 5, CHLOROPLASTIC"/>
    <property type="match status" value="1"/>
</dbReference>
<dbReference type="PANTHER" id="PTHR43019">
    <property type="entry name" value="SERINE ENDOPROTEASE DEGS"/>
    <property type="match status" value="1"/>
</dbReference>
<dbReference type="Pfam" id="PF13365">
    <property type="entry name" value="Trypsin_2"/>
    <property type="match status" value="1"/>
</dbReference>
<dbReference type="PRINTS" id="PR00839">
    <property type="entry name" value="V8PROTEASE"/>
</dbReference>
<dbReference type="SUPFAM" id="SSF50494">
    <property type="entry name" value="Trypsin-like serine proteases"/>
    <property type="match status" value="1"/>
</dbReference>
<dbReference type="PROSITE" id="PS00672">
    <property type="entry name" value="V8_HIS"/>
    <property type="match status" value="1"/>
</dbReference>
<organism>
    <name type="scientific">Staphylococcus aureus (strain USA300)</name>
    <dbReference type="NCBI Taxonomy" id="367830"/>
    <lineage>
        <taxon>Bacteria</taxon>
        <taxon>Bacillati</taxon>
        <taxon>Bacillota</taxon>
        <taxon>Bacilli</taxon>
        <taxon>Bacillales</taxon>
        <taxon>Staphylococcaceae</taxon>
        <taxon>Staphylococcus</taxon>
    </lineage>
</organism>
<proteinExistence type="inferred from homology"/>
<feature type="signal peptide" evidence="1">
    <location>
        <begin position="1"/>
        <end position="36"/>
    </location>
</feature>
<feature type="chain" id="PRO_0000359588" description="Serine protease SplF">
    <location>
        <begin position="37"/>
        <end position="239"/>
    </location>
</feature>
<feature type="active site" description="Charge relay system" evidence="1">
    <location>
        <position position="75"/>
    </location>
</feature>
<feature type="active site" description="Charge relay system" evidence="1">
    <location>
        <position position="114"/>
    </location>
</feature>
<feature type="active site" description="Charge relay system" evidence="1">
    <location>
        <position position="192"/>
    </location>
</feature>
<comment type="subcellular location">
    <subcellularLocation>
        <location evidence="1">Secreted</location>
    </subcellularLocation>
</comment>
<comment type="similarity">
    <text evidence="2">Belongs to the peptidase S1B family.</text>
</comment>
<gene>
    <name type="primary">splF</name>
    <name type="ordered locus">SAUSA300_1753</name>
</gene>
<evidence type="ECO:0000250" key="1"/>
<evidence type="ECO:0000305" key="2"/>
<name>SPLF_STAA3</name>
<sequence length="239" mass="25641">MNKNIIIKSIGALTILTSITGVGTTMVEGIQQTAKAENTVKQITNTNVAPYSGVTWMGAGTGFVVGNHTIITNKHVTYHMKVGDEIKAHPNGFYNNGGGLYKVTKIVDYPGKEDIAVVQVEEKSTQPKGRKFKDFTSKFNIASEAKENEPISVIGYPNPNGNKLQMYESTGKVLSVNGNIVSSDAIIQPGSSGSPILNSKHEAIGVIYAGNKPSGESTRGFAVYFSPEIKKFIADNLDK</sequence>
<reference key="1">
    <citation type="journal article" date="2006" name="Lancet">
        <title>Complete genome sequence of USA300, an epidemic clone of community-acquired meticillin-resistant Staphylococcus aureus.</title>
        <authorList>
            <person name="Diep B.A."/>
            <person name="Gill S.R."/>
            <person name="Chang R.F."/>
            <person name="Phan T.H."/>
            <person name="Chen J.H."/>
            <person name="Davidson M.G."/>
            <person name="Lin F."/>
            <person name="Lin J."/>
            <person name="Carleton H.A."/>
            <person name="Mongodin E.F."/>
            <person name="Sensabaugh G.F."/>
            <person name="Perdreau-Remington F."/>
        </authorList>
    </citation>
    <scope>NUCLEOTIDE SEQUENCE [LARGE SCALE GENOMIC DNA]</scope>
    <source>
        <strain>USA300</strain>
    </source>
</reference>
<protein>
    <recommendedName>
        <fullName>Serine protease SplF</fullName>
        <ecNumber>3.4.21.-</ecNumber>
    </recommendedName>
</protein>